<sequence length="715" mass="77133">MSPHQTTGQESDNMAVNGENAPASSQYIQTNNDEMADMVAAEKKAAAAKAAKDPSRPKRKKAKRACYACQRGHLTCGDERPCQRCIKRGFQDACHDGVRKKAKYLHDAPNEVLMAGVGATLYNQRNAAQNNVNGSNTSPGVPQQMTSPNFYSTQQSPDYNSFPQNKNELHDSTVGPENYASQSPVSPTYQIGQGMPNPVLSPSLPQSASETPSTANAAPGQFNSAFFDPSDPALFNFDLASMNFGNHYGALEFGMLGHMATGVGDTPPSDSGAQRGSIGQNGSGTFGLAGSNFAESPSNQTPYLFNESGMNDWTQTAPVNRRSIYGSNANMVAGNMSDKPHAFAIESAPANFASPASNESPMMTTNSATFEDTTNSGAFSSRPNASVSQQRQQPVVSTPQLKQQNLNLGGRRRHKNASSIYDSVKDPYSYTSGFHSLTAFIQRRFSPQKTLRIAKALASIRPSFIATTKTLNRDDLIFMEKCFQRTLWEYEDFINACGTPTIVCRRTGEIAAVGKEFSILTGWRKEVLLGKEPNHNVNTGGSSGLVTDSTSRGSYTPRPYSSDVYNSSTAATPRTQPVFLAELLDDDSVIEFYEDFAKLAFGDSRGSVMTTCKLLKYKTKADSDILAGSNGEADAGQNGEASSSEANELNGSNANGATTNGRGLRRWGKGEIAGEAGMNQLGFRDGKVECSYCWTVKRDVFDIPMLIVMNFLPCI</sequence>
<accession>E4UP58</accession>
<organism>
    <name type="scientific">Arthroderma gypseum (strain ATCC MYA-4604 / CBS 118893)</name>
    <name type="common">Microsporum gypseum</name>
    <dbReference type="NCBI Taxonomy" id="535722"/>
    <lineage>
        <taxon>Eukaryota</taxon>
        <taxon>Fungi</taxon>
        <taxon>Dikarya</taxon>
        <taxon>Ascomycota</taxon>
        <taxon>Pezizomycotina</taxon>
        <taxon>Eurotiomycetes</taxon>
        <taxon>Eurotiomycetidae</taxon>
        <taxon>Onygenales</taxon>
        <taxon>Arthrodermataceae</taxon>
        <taxon>Nannizzia</taxon>
    </lineage>
</organism>
<dbReference type="EMBL" id="DS989823">
    <property type="protein sequence ID" value="EFQ99000.1"/>
    <property type="molecule type" value="Genomic_DNA"/>
</dbReference>
<dbReference type="RefSeq" id="XP_003174483.1">
    <property type="nucleotide sequence ID" value="XM_003174435.1"/>
</dbReference>
<dbReference type="SMR" id="E4UP58"/>
<dbReference type="FunCoup" id="E4UP58">
    <property type="interactions" value="196"/>
</dbReference>
<dbReference type="STRING" id="535722.E4UP58"/>
<dbReference type="GeneID" id="10029760"/>
<dbReference type="VEuPathDB" id="FungiDB:MGYG_02011"/>
<dbReference type="eggNOG" id="ENOG502R1M5">
    <property type="taxonomic scope" value="Eukaryota"/>
</dbReference>
<dbReference type="HOGENOM" id="CLU_010748_1_0_1"/>
<dbReference type="InParanoid" id="E4UP58"/>
<dbReference type="OMA" id="VMTTCKL"/>
<dbReference type="OrthoDB" id="2538135at2759"/>
<dbReference type="Proteomes" id="UP000002669">
    <property type="component" value="Unassembled WGS sequence"/>
</dbReference>
<dbReference type="GO" id="GO:0005634">
    <property type="term" value="C:nucleus"/>
    <property type="evidence" value="ECO:0007669"/>
    <property type="project" value="UniProtKB-SubCell"/>
</dbReference>
<dbReference type="GO" id="GO:0000981">
    <property type="term" value="F:DNA-binding transcription factor activity, RNA polymerase II-specific"/>
    <property type="evidence" value="ECO:0007669"/>
    <property type="project" value="InterPro"/>
</dbReference>
<dbReference type="GO" id="GO:0000977">
    <property type="term" value="F:RNA polymerase II transcription regulatory region sequence-specific DNA binding"/>
    <property type="evidence" value="ECO:0007669"/>
    <property type="project" value="TreeGrafter"/>
</dbReference>
<dbReference type="GO" id="GO:0008270">
    <property type="term" value="F:zinc ion binding"/>
    <property type="evidence" value="ECO:0007669"/>
    <property type="project" value="InterPro"/>
</dbReference>
<dbReference type="GO" id="GO:0009267">
    <property type="term" value="P:cellular response to starvation"/>
    <property type="evidence" value="ECO:0007669"/>
    <property type="project" value="TreeGrafter"/>
</dbReference>
<dbReference type="GO" id="GO:0006094">
    <property type="term" value="P:gluconeogenesis"/>
    <property type="evidence" value="ECO:0007669"/>
    <property type="project" value="UniProtKB-KW"/>
</dbReference>
<dbReference type="CDD" id="cd00067">
    <property type="entry name" value="GAL4"/>
    <property type="match status" value="1"/>
</dbReference>
<dbReference type="InterPro" id="IPR050335">
    <property type="entry name" value="ERT1_acuK_gluconeogen_tf"/>
</dbReference>
<dbReference type="InterPro" id="IPR056751">
    <property type="entry name" value="PAS_13"/>
</dbReference>
<dbReference type="InterPro" id="IPR036864">
    <property type="entry name" value="Zn2-C6_fun-type_DNA-bd_sf"/>
</dbReference>
<dbReference type="InterPro" id="IPR001138">
    <property type="entry name" value="Zn2Cys6_DnaBD"/>
</dbReference>
<dbReference type="PANTHER" id="PTHR47659:SF1">
    <property type="entry name" value="TRANSCRIPTION ACTIVATOR OF GLUCONEOGENESIS ERT1"/>
    <property type="match status" value="1"/>
</dbReference>
<dbReference type="PANTHER" id="PTHR47659">
    <property type="entry name" value="ZN(II)2CYS6 TRANSCRIPTION FACTOR (EUROFUNG)-RELATED"/>
    <property type="match status" value="1"/>
</dbReference>
<dbReference type="Pfam" id="PF24990">
    <property type="entry name" value="PAS_13"/>
    <property type="match status" value="1"/>
</dbReference>
<dbReference type="SMART" id="SM00066">
    <property type="entry name" value="GAL4"/>
    <property type="match status" value="1"/>
</dbReference>
<dbReference type="SUPFAM" id="SSF57701">
    <property type="entry name" value="Zn2/Cys6 DNA-binding domain"/>
    <property type="match status" value="1"/>
</dbReference>
<dbReference type="PROSITE" id="PS50048">
    <property type="entry name" value="ZN2_CY6_FUNGAL_2"/>
    <property type="match status" value="1"/>
</dbReference>
<feature type="chain" id="PRO_0000406429" description="Transcription activator of gluconeogenesis MGYG_02011">
    <location>
        <begin position="1"/>
        <end position="715"/>
    </location>
</feature>
<feature type="DNA-binding region" description="Zn(2)-C6 fungal-type" evidence="2">
    <location>
        <begin position="66"/>
        <end position="94"/>
    </location>
</feature>
<feature type="region of interest" description="Disordered" evidence="3">
    <location>
        <begin position="1"/>
        <end position="28"/>
    </location>
</feature>
<feature type="region of interest" description="Disordered" evidence="3">
    <location>
        <begin position="129"/>
        <end position="223"/>
    </location>
</feature>
<feature type="region of interest" description="Disordered" evidence="3">
    <location>
        <begin position="354"/>
        <end position="414"/>
    </location>
</feature>
<feature type="region of interest" description="Disordered" evidence="3">
    <location>
        <begin position="534"/>
        <end position="569"/>
    </location>
</feature>
<feature type="region of interest" description="Disordered" evidence="3">
    <location>
        <begin position="628"/>
        <end position="663"/>
    </location>
</feature>
<feature type="compositionally biased region" description="Polar residues" evidence="3">
    <location>
        <begin position="1"/>
        <end position="14"/>
    </location>
</feature>
<feature type="compositionally biased region" description="Polar residues" evidence="3">
    <location>
        <begin position="129"/>
        <end position="166"/>
    </location>
</feature>
<feature type="compositionally biased region" description="Polar residues" evidence="3">
    <location>
        <begin position="179"/>
        <end position="191"/>
    </location>
</feature>
<feature type="compositionally biased region" description="Polar residues" evidence="3">
    <location>
        <begin position="203"/>
        <end position="223"/>
    </location>
</feature>
<feature type="compositionally biased region" description="Polar residues" evidence="3">
    <location>
        <begin position="362"/>
        <end position="385"/>
    </location>
</feature>
<feature type="compositionally biased region" description="Low complexity" evidence="3">
    <location>
        <begin position="386"/>
        <end position="400"/>
    </location>
</feature>
<feature type="compositionally biased region" description="Polar residues" evidence="3">
    <location>
        <begin position="535"/>
        <end position="554"/>
    </location>
</feature>
<feature type="compositionally biased region" description="Polar residues" evidence="3">
    <location>
        <begin position="639"/>
        <end position="649"/>
    </location>
</feature>
<feature type="compositionally biased region" description="Low complexity" evidence="3">
    <location>
        <begin position="650"/>
        <end position="662"/>
    </location>
</feature>
<reference key="1">
    <citation type="journal article" date="2012" name="MBio">
        <title>Comparative genome analysis of Trichophyton rubrum and related dermatophytes reveals candidate genes involved in infection.</title>
        <authorList>
            <person name="Martinez D.A."/>
            <person name="Oliver B.G."/>
            <person name="Graeser Y."/>
            <person name="Goldberg J.M."/>
            <person name="Li W."/>
            <person name="Martinez-Rossi N.M."/>
            <person name="Monod M."/>
            <person name="Shelest E."/>
            <person name="Barton R.C."/>
            <person name="Birch E."/>
            <person name="Brakhage A.A."/>
            <person name="Chen Z."/>
            <person name="Gurr S.J."/>
            <person name="Heiman D."/>
            <person name="Heitman J."/>
            <person name="Kosti I."/>
            <person name="Rossi A."/>
            <person name="Saif S."/>
            <person name="Samalova M."/>
            <person name="Saunders C.W."/>
            <person name="Shea T."/>
            <person name="Summerbell R.C."/>
            <person name="Xu J."/>
            <person name="Young S."/>
            <person name="Zeng Q."/>
            <person name="Birren B.W."/>
            <person name="Cuomo C.A."/>
            <person name="White T.C."/>
        </authorList>
    </citation>
    <scope>NUCLEOTIDE SEQUENCE [LARGE SCALE GENOMIC DNA]</scope>
    <source>
        <strain>ATCC MYA-4604 / CBS 118893</strain>
    </source>
</reference>
<evidence type="ECO:0000250" key="1"/>
<evidence type="ECO:0000255" key="2">
    <source>
        <dbReference type="PROSITE-ProRule" id="PRU00227"/>
    </source>
</evidence>
<evidence type="ECO:0000256" key="3">
    <source>
        <dbReference type="SAM" id="MobiDB-lite"/>
    </source>
</evidence>
<evidence type="ECO:0000305" key="4"/>
<keyword id="KW-0010">Activator</keyword>
<keyword id="KW-0238">DNA-binding</keyword>
<keyword id="KW-0312">Gluconeogenesis</keyword>
<keyword id="KW-0479">Metal-binding</keyword>
<keyword id="KW-0539">Nucleus</keyword>
<keyword id="KW-1185">Reference proteome</keyword>
<keyword id="KW-0804">Transcription</keyword>
<keyword id="KW-0805">Transcription regulation</keyword>
<keyword id="KW-0862">Zinc</keyword>
<comment type="function">
    <text evidence="1">Transcription factor which regulates nonfermentable carbon utilization. Activator of gluconeogenetic genes (By similarity).</text>
</comment>
<comment type="subcellular location">
    <subcellularLocation>
        <location evidence="2">Nucleus</location>
    </subcellularLocation>
</comment>
<comment type="similarity">
    <text evidence="4">Belongs to the ERT1/acuK family.</text>
</comment>
<name>ACUK_ARTGP</name>
<protein>
    <recommendedName>
        <fullName>Transcription activator of gluconeogenesis MGYG_02011</fullName>
    </recommendedName>
</protein>
<gene>
    <name type="ORF">MGYG_02011</name>
</gene>
<proteinExistence type="inferred from homology"/>